<gene>
    <name evidence="1" type="primary">yidD</name>
    <name type="ordered locus">ECIAI39_4309</name>
</gene>
<protein>
    <recommendedName>
        <fullName evidence="1">Putative membrane protein insertion efficiency factor</fullName>
    </recommendedName>
</protein>
<proteinExistence type="inferred from homology"/>
<dbReference type="EMBL" id="CU928164">
    <property type="protein sequence ID" value="CAR20415.1"/>
    <property type="molecule type" value="Genomic_DNA"/>
</dbReference>
<dbReference type="RefSeq" id="WP_001307474.1">
    <property type="nucleotide sequence ID" value="NC_011750.1"/>
</dbReference>
<dbReference type="RefSeq" id="YP_002410183.1">
    <property type="nucleotide sequence ID" value="NC_011750.1"/>
</dbReference>
<dbReference type="STRING" id="585057.ECIAI39_4309"/>
<dbReference type="GeneID" id="97443257"/>
<dbReference type="KEGG" id="ect:ECIAI39_4309"/>
<dbReference type="HOGENOM" id="CLU_144811_5_2_6"/>
<dbReference type="Proteomes" id="UP000000749">
    <property type="component" value="Chromosome"/>
</dbReference>
<dbReference type="GO" id="GO:0005886">
    <property type="term" value="C:plasma membrane"/>
    <property type="evidence" value="ECO:0007669"/>
    <property type="project" value="UniProtKB-SubCell"/>
</dbReference>
<dbReference type="HAMAP" id="MF_00386">
    <property type="entry name" value="UPF0161_YidD"/>
    <property type="match status" value="1"/>
</dbReference>
<dbReference type="InterPro" id="IPR002696">
    <property type="entry name" value="Membr_insert_effic_factor_YidD"/>
</dbReference>
<dbReference type="NCBIfam" id="TIGR00278">
    <property type="entry name" value="membrane protein insertion efficiency factor YidD"/>
    <property type="match status" value="1"/>
</dbReference>
<dbReference type="PANTHER" id="PTHR33383">
    <property type="entry name" value="MEMBRANE PROTEIN INSERTION EFFICIENCY FACTOR-RELATED"/>
    <property type="match status" value="1"/>
</dbReference>
<dbReference type="PANTHER" id="PTHR33383:SF1">
    <property type="entry name" value="MEMBRANE PROTEIN INSERTION EFFICIENCY FACTOR-RELATED"/>
    <property type="match status" value="1"/>
</dbReference>
<dbReference type="Pfam" id="PF01809">
    <property type="entry name" value="YidD"/>
    <property type="match status" value="1"/>
</dbReference>
<dbReference type="SMART" id="SM01234">
    <property type="entry name" value="Haemolytic"/>
    <property type="match status" value="1"/>
</dbReference>
<comment type="function">
    <text evidence="1">Could be involved in insertion of integral membrane proteins into the membrane.</text>
</comment>
<comment type="subcellular location">
    <subcellularLocation>
        <location evidence="1">Cell inner membrane</location>
        <topology evidence="1">Peripheral membrane protein</topology>
        <orientation evidence="1">Cytoplasmic side</orientation>
    </subcellularLocation>
</comment>
<comment type="similarity">
    <text evidence="1">Belongs to the UPF0161 family.</text>
</comment>
<accession>B7NR07</accession>
<organism>
    <name type="scientific">Escherichia coli O7:K1 (strain IAI39 / ExPEC)</name>
    <dbReference type="NCBI Taxonomy" id="585057"/>
    <lineage>
        <taxon>Bacteria</taxon>
        <taxon>Pseudomonadati</taxon>
        <taxon>Pseudomonadota</taxon>
        <taxon>Gammaproteobacteria</taxon>
        <taxon>Enterobacterales</taxon>
        <taxon>Enterobacteriaceae</taxon>
        <taxon>Escherichia</taxon>
    </lineage>
</organism>
<sequence>MAPPLSPGSRVLIALIRVYQRLISPLLGPHCRFTPTCSSYGIEALRRFGVIKGSWLTVKRVLKCHPLHPGGDDPVPPGPFDTREH</sequence>
<reference key="1">
    <citation type="journal article" date="2009" name="PLoS Genet.">
        <title>Organised genome dynamics in the Escherichia coli species results in highly diverse adaptive paths.</title>
        <authorList>
            <person name="Touchon M."/>
            <person name="Hoede C."/>
            <person name="Tenaillon O."/>
            <person name="Barbe V."/>
            <person name="Baeriswyl S."/>
            <person name="Bidet P."/>
            <person name="Bingen E."/>
            <person name="Bonacorsi S."/>
            <person name="Bouchier C."/>
            <person name="Bouvet O."/>
            <person name="Calteau A."/>
            <person name="Chiapello H."/>
            <person name="Clermont O."/>
            <person name="Cruveiller S."/>
            <person name="Danchin A."/>
            <person name="Diard M."/>
            <person name="Dossat C."/>
            <person name="Karoui M.E."/>
            <person name="Frapy E."/>
            <person name="Garry L."/>
            <person name="Ghigo J.M."/>
            <person name="Gilles A.M."/>
            <person name="Johnson J."/>
            <person name="Le Bouguenec C."/>
            <person name="Lescat M."/>
            <person name="Mangenot S."/>
            <person name="Martinez-Jehanne V."/>
            <person name="Matic I."/>
            <person name="Nassif X."/>
            <person name="Oztas S."/>
            <person name="Petit M.A."/>
            <person name="Pichon C."/>
            <person name="Rouy Z."/>
            <person name="Ruf C.S."/>
            <person name="Schneider D."/>
            <person name="Tourret J."/>
            <person name="Vacherie B."/>
            <person name="Vallenet D."/>
            <person name="Medigue C."/>
            <person name="Rocha E.P.C."/>
            <person name="Denamur E."/>
        </authorList>
    </citation>
    <scope>NUCLEOTIDE SEQUENCE [LARGE SCALE GENOMIC DNA]</scope>
    <source>
        <strain>IAI39 / ExPEC</strain>
    </source>
</reference>
<name>YIDD_ECO7I</name>
<keyword id="KW-0997">Cell inner membrane</keyword>
<keyword id="KW-1003">Cell membrane</keyword>
<keyword id="KW-0472">Membrane</keyword>
<feature type="chain" id="PRO_1000122638" description="Putative membrane protein insertion efficiency factor">
    <location>
        <begin position="1"/>
        <end position="85"/>
    </location>
</feature>
<evidence type="ECO:0000255" key="1">
    <source>
        <dbReference type="HAMAP-Rule" id="MF_00386"/>
    </source>
</evidence>